<feature type="chain" id="PRO_0000270318" description="Methionine import ATP-binding protein MetN">
    <location>
        <begin position="1"/>
        <end position="344"/>
    </location>
</feature>
<feature type="domain" description="ABC transporter" evidence="1">
    <location>
        <begin position="2"/>
        <end position="241"/>
    </location>
</feature>
<feature type="binding site" evidence="1">
    <location>
        <begin position="38"/>
        <end position="45"/>
    </location>
    <ligand>
        <name>ATP</name>
        <dbReference type="ChEBI" id="CHEBI:30616"/>
    </ligand>
</feature>
<proteinExistence type="inferred from homology"/>
<accession>Q38WL5</accession>
<comment type="function">
    <text evidence="1">Part of the ABC transporter complex MetNIQ involved in methionine import. Responsible for energy coupling to the transport system.</text>
</comment>
<comment type="catalytic activity">
    <reaction evidence="1">
        <text>L-methionine(out) + ATP + H2O = L-methionine(in) + ADP + phosphate + H(+)</text>
        <dbReference type="Rhea" id="RHEA:29779"/>
        <dbReference type="ChEBI" id="CHEBI:15377"/>
        <dbReference type="ChEBI" id="CHEBI:15378"/>
        <dbReference type="ChEBI" id="CHEBI:30616"/>
        <dbReference type="ChEBI" id="CHEBI:43474"/>
        <dbReference type="ChEBI" id="CHEBI:57844"/>
        <dbReference type="ChEBI" id="CHEBI:456216"/>
        <dbReference type="EC" id="7.4.2.11"/>
    </reaction>
</comment>
<comment type="catalytic activity">
    <reaction evidence="1">
        <text>D-methionine(out) + ATP + H2O = D-methionine(in) + ADP + phosphate + H(+)</text>
        <dbReference type="Rhea" id="RHEA:29767"/>
        <dbReference type="ChEBI" id="CHEBI:15377"/>
        <dbReference type="ChEBI" id="CHEBI:15378"/>
        <dbReference type="ChEBI" id="CHEBI:30616"/>
        <dbReference type="ChEBI" id="CHEBI:43474"/>
        <dbReference type="ChEBI" id="CHEBI:57932"/>
        <dbReference type="ChEBI" id="CHEBI:456216"/>
        <dbReference type="EC" id="7.4.2.11"/>
    </reaction>
</comment>
<comment type="subunit">
    <text evidence="1">The complex is composed of two ATP-binding proteins (MetN), two transmembrane proteins (MetI) and a solute-binding protein (MetQ).</text>
</comment>
<comment type="subcellular location">
    <subcellularLocation>
        <location evidence="1">Cell membrane</location>
        <topology evidence="1">Peripheral membrane protein</topology>
    </subcellularLocation>
</comment>
<comment type="similarity">
    <text evidence="1">Belongs to the ABC transporter superfamily. Methionine importer (TC 3.A.1.24) family.</text>
</comment>
<organism>
    <name type="scientific">Latilactobacillus sakei subsp. sakei (strain 23K)</name>
    <name type="common">Lactobacillus sakei subsp. sakei</name>
    <dbReference type="NCBI Taxonomy" id="314315"/>
    <lineage>
        <taxon>Bacteria</taxon>
        <taxon>Bacillati</taxon>
        <taxon>Bacillota</taxon>
        <taxon>Bacilli</taxon>
        <taxon>Lactobacillales</taxon>
        <taxon>Lactobacillaceae</taxon>
        <taxon>Latilactobacillus</taxon>
    </lineage>
</organism>
<dbReference type="EC" id="7.4.2.11" evidence="1"/>
<dbReference type="EMBL" id="CR936503">
    <property type="protein sequence ID" value="CAI55417.1"/>
    <property type="molecule type" value="Genomic_DNA"/>
</dbReference>
<dbReference type="RefSeq" id="WP_011374815.1">
    <property type="nucleotide sequence ID" value="NC_007576.1"/>
</dbReference>
<dbReference type="SMR" id="Q38WL5"/>
<dbReference type="STRING" id="314315.LCA_1116"/>
<dbReference type="KEGG" id="lsa:LCA_1116"/>
<dbReference type="eggNOG" id="COG1135">
    <property type="taxonomic scope" value="Bacteria"/>
</dbReference>
<dbReference type="HOGENOM" id="CLU_000604_1_3_9"/>
<dbReference type="OrthoDB" id="9802264at2"/>
<dbReference type="Proteomes" id="UP000002707">
    <property type="component" value="Chromosome"/>
</dbReference>
<dbReference type="GO" id="GO:0005886">
    <property type="term" value="C:plasma membrane"/>
    <property type="evidence" value="ECO:0007669"/>
    <property type="project" value="UniProtKB-SubCell"/>
</dbReference>
<dbReference type="GO" id="GO:0033232">
    <property type="term" value="F:ABC-type D-methionine transporter activity"/>
    <property type="evidence" value="ECO:0007669"/>
    <property type="project" value="UniProtKB-EC"/>
</dbReference>
<dbReference type="GO" id="GO:0005524">
    <property type="term" value="F:ATP binding"/>
    <property type="evidence" value="ECO:0007669"/>
    <property type="project" value="UniProtKB-KW"/>
</dbReference>
<dbReference type="GO" id="GO:0016887">
    <property type="term" value="F:ATP hydrolysis activity"/>
    <property type="evidence" value="ECO:0007669"/>
    <property type="project" value="InterPro"/>
</dbReference>
<dbReference type="CDD" id="cd03258">
    <property type="entry name" value="ABC_MetN_methionine_transporter"/>
    <property type="match status" value="1"/>
</dbReference>
<dbReference type="FunFam" id="3.40.50.300:FF:000032">
    <property type="entry name" value="Export ABC transporter ATP-binding protein"/>
    <property type="match status" value="1"/>
</dbReference>
<dbReference type="Gene3D" id="3.30.70.260">
    <property type="match status" value="1"/>
</dbReference>
<dbReference type="Gene3D" id="3.40.50.300">
    <property type="entry name" value="P-loop containing nucleotide triphosphate hydrolases"/>
    <property type="match status" value="1"/>
</dbReference>
<dbReference type="InterPro" id="IPR003593">
    <property type="entry name" value="AAA+_ATPase"/>
</dbReference>
<dbReference type="InterPro" id="IPR003439">
    <property type="entry name" value="ABC_transporter-like_ATP-bd"/>
</dbReference>
<dbReference type="InterPro" id="IPR017871">
    <property type="entry name" value="ABC_transporter-like_CS"/>
</dbReference>
<dbReference type="InterPro" id="IPR045865">
    <property type="entry name" value="ACT-like_dom_sf"/>
</dbReference>
<dbReference type="InterPro" id="IPR041701">
    <property type="entry name" value="MetN_ABC"/>
</dbReference>
<dbReference type="InterPro" id="IPR050086">
    <property type="entry name" value="MetN_ABC_transporter-like"/>
</dbReference>
<dbReference type="InterPro" id="IPR018449">
    <property type="entry name" value="NIL_domain"/>
</dbReference>
<dbReference type="InterPro" id="IPR027417">
    <property type="entry name" value="P-loop_NTPase"/>
</dbReference>
<dbReference type="PANTHER" id="PTHR43166">
    <property type="entry name" value="AMINO ACID IMPORT ATP-BINDING PROTEIN"/>
    <property type="match status" value="1"/>
</dbReference>
<dbReference type="PANTHER" id="PTHR43166:SF30">
    <property type="entry name" value="METHIONINE IMPORT ATP-BINDING PROTEIN METN"/>
    <property type="match status" value="1"/>
</dbReference>
<dbReference type="Pfam" id="PF00005">
    <property type="entry name" value="ABC_tran"/>
    <property type="match status" value="1"/>
</dbReference>
<dbReference type="Pfam" id="PF09383">
    <property type="entry name" value="NIL"/>
    <property type="match status" value="1"/>
</dbReference>
<dbReference type="SMART" id="SM00382">
    <property type="entry name" value="AAA"/>
    <property type="match status" value="1"/>
</dbReference>
<dbReference type="SMART" id="SM00930">
    <property type="entry name" value="NIL"/>
    <property type="match status" value="1"/>
</dbReference>
<dbReference type="SUPFAM" id="SSF55021">
    <property type="entry name" value="ACT-like"/>
    <property type="match status" value="1"/>
</dbReference>
<dbReference type="SUPFAM" id="SSF52540">
    <property type="entry name" value="P-loop containing nucleoside triphosphate hydrolases"/>
    <property type="match status" value="1"/>
</dbReference>
<dbReference type="PROSITE" id="PS00211">
    <property type="entry name" value="ABC_TRANSPORTER_1"/>
    <property type="match status" value="1"/>
</dbReference>
<dbReference type="PROSITE" id="PS50893">
    <property type="entry name" value="ABC_TRANSPORTER_2"/>
    <property type="match status" value="1"/>
</dbReference>
<dbReference type="PROSITE" id="PS51264">
    <property type="entry name" value="METN"/>
    <property type="match status" value="1"/>
</dbReference>
<protein>
    <recommendedName>
        <fullName evidence="1">Methionine import ATP-binding protein MetN</fullName>
        <ecNumber evidence="1">7.4.2.11</ecNumber>
    </recommendedName>
</protein>
<evidence type="ECO:0000255" key="1">
    <source>
        <dbReference type="HAMAP-Rule" id="MF_01719"/>
    </source>
</evidence>
<name>METN_LATSS</name>
<sequence>MLELKQVGKVYQREQQTFTALSDISLKIEAGEIYGIIGYSGAGKSTLIRLLNGLEKPTSGDVLVNGQSIVGLSEQAMRPIRQKIGMIFQHFNLLWSKTILENIALPLKLAGVGKKERLAKAKEMLALVELTDLGAAYPSELSGGQKQRVAIARALISEPAILLCDEATSALDPKTTNSILSLLAKINQEMGITIVLVTHEMDAVRRICQRIAVMAAGRVIEEGTTQAIFETPQAEVTKAFVSESLVITPSETAASIEQLLTRVPEGTIIKLRFNEEQSSQPVIGQLMRRYPSVEVSVISGSLQQTINGALGYLYIQIQASPDDLKQALSDLSQQTIEVEVLRHG</sequence>
<gene>
    <name evidence="1" type="primary">metN</name>
    <name type="ordered locus">LCA_1116</name>
</gene>
<reference key="1">
    <citation type="journal article" date="2005" name="Nat. Biotechnol.">
        <title>The complete genome sequence of the meat-borne lactic acid bacterium Lactobacillus sakei 23K.</title>
        <authorList>
            <person name="Chaillou S."/>
            <person name="Champomier-Verges M.-C."/>
            <person name="Cornet M."/>
            <person name="Crutz-Le Coq A.-M."/>
            <person name="Dudez A.-M."/>
            <person name="Martin V."/>
            <person name="Beaufils S."/>
            <person name="Darbon-Rongere E."/>
            <person name="Bossy R."/>
            <person name="Loux V."/>
            <person name="Zagorec M."/>
        </authorList>
    </citation>
    <scope>NUCLEOTIDE SEQUENCE [LARGE SCALE GENOMIC DNA]</scope>
    <source>
        <strain>23K</strain>
    </source>
</reference>
<keyword id="KW-0029">Amino-acid transport</keyword>
<keyword id="KW-0067">ATP-binding</keyword>
<keyword id="KW-1003">Cell membrane</keyword>
<keyword id="KW-0472">Membrane</keyword>
<keyword id="KW-0547">Nucleotide-binding</keyword>
<keyword id="KW-1185">Reference proteome</keyword>
<keyword id="KW-1278">Translocase</keyword>
<keyword id="KW-0813">Transport</keyword>